<accession>Q7L622</accession>
<accession>Q9BVR2</accession>
<accession>Q9H9E9</accession>
<accession>Q9NXC0</accession>
<accession>Q9P2L3</accession>
<reference key="1">
    <citation type="journal article" date="2007" name="Exp. Cell Res.">
        <title>G2E3 is a nucleo-cytoplasmic shuttling protein with DNA damage responsive localization.</title>
        <authorList>
            <person name="Brooks W.S."/>
            <person name="Banerjee S."/>
            <person name="Crawford D.F."/>
        </authorList>
    </citation>
    <scope>NUCLEOTIDE SEQUENCE [MRNA]</scope>
    <scope>SUBCELLULAR LOCATION</scope>
    <scope>MUTAGENESIS OF 30-LYS-LYS-31 AND CYS-666</scope>
</reference>
<reference key="2">
    <citation type="journal article" date="2000" name="DNA Res.">
        <title>Prediction of the coding sequences of unidentified human genes. XVI. The complete sequences of 150 new cDNA clones from brain which code for large proteins in vitro.</title>
        <authorList>
            <person name="Nagase T."/>
            <person name="Kikuno R."/>
            <person name="Ishikawa K."/>
            <person name="Hirosawa M."/>
            <person name="Ohara O."/>
        </authorList>
    </citation>
    <scope>NUCLEOTIDE SEQUENCE [LARGE SCALE MRNA]</scope>
    <scope>TISSUE SPECIFICITY</scope>
    <source>
        <tissue>Brain</tissue>
    </source>
</reference>
<reference key="3">
    <citation type="journal article" date="2004" name="Nat. Genet.">
        <title>Complete sequencing and characterization of 21,243 full-length human cDNAs.</title>
        <authorList>
            <person name="Ota T."/>
            <person name="Suzuki Y."/>
            <person name="Nishikawa T."/>
            <person name="Otsuki T."/>
            <person name="Sugiyama T."/>
            <person name="Irie R."/>
            <person name="Wakamatsu A."/>
            <person name="Hayashi K."/>
            <person name="Sato H."/>
            <person name="Nagai K."/>
            <person name="Kimura K."/>
            <person name="Makita H."/>
            <person name="Sekine M."/>
            <person name="Obayashi M."/>
            <person name="Nishi T."/>
            <person name="Shibahara T."/>
            <person name="Tanaka T."/>
            <person name="Ishii S."/>
            <person name="Yamamoto J."/>
            <person name="Saito K."/>
            <person name="Kawai Y."/>
            <person name="Isono Y."/>
            <person name="Nakamura Y."/>
            <person name="Nagahari K."/>
            <person name="Murakami K."/>
            <person name="Yasuda T."/>
            <person name="Iwayanagi T."/>
            <person name="Wagatsuma M."/>
            <person name="Shiratori A."/>
            <person name="Sudo H."/>
            <person name="Hosoiri T."/>
            <person name="Kaku Y."/>
            <person name="Kodaira H."/>
            <person name="Kondo H."/>
            <person name="Sugawara M."/>
            <person name="Takahashi M."/>
            <person name="Kanda K."/>
            <person name="Yokoi T."/>
            <person name="Furuya T."/>
            <person name="Kikkawa E."/>
            <person name="Omura Y."/>
            <person name="Abe K."/>
            <person name="Kamihara K."/>
            <person name="Katsuta N."/>
            <person name="Sato K."/>
            <person name="Tanikawa M."/>
            <person name="Yamazaki M."/>
            <person name="Ninomiya K."/>
            <person name="Ishibashi T."/>
            <person name="Yamashita H."/>
            <person name="Murakawa K."/>
            <person name="Fujimori K."/>
            <person name="Tanai H."/>
            <person name="Kimata M."/>
            <person name="Watanabe M."/>
            <person name="Hiraoka S."/>
            <person name="Chiba Y."/>
            <person name="Ishida S."/>
            <person name="Ono Y."/>
            <person name="Takiguchi S."/>
            <person name="Watanabe S."/>
            <person name="Yosida M."/>
            <person name="Hotuta T."/>
            <person name="Kusano J."/>
            <person name="Kanehori K."/>
            <person name="Takahashi-Fujii A."/>
            <person name="Hara H."/>
            <person name="Tanase T.-O."/>
            <person name="Nomura Y."/>
            <person name="Togiya S."/>
            <person name="Komai F."/>
            <person name="Hara R."/>
            <person name="Takeuchi K."/>
            <person name="Arita M."/>
            <person name="Imose N."/>
            <person name="Musashino K."/>
            <person name="Yuuki H."/>
            <person name="Oshima A."/>
            <person name="Sasaki N."/>
            <person name="Aotsuka S."/>
            <person name="Yoshikawa Y."/>
            <person name="Matsunawa H."/>
            <person name="Ichihara T."/>
            <person name="Shiohata N."/>
            <person name="Sano S."/>
            <person name="Moriya S."/>
            <person name="Momiyama H."/>
            <person name="Satoh N."/>
            <person name="Takami S."/>
            <person name="Terashima Y."/>
            <person name="Suzuki O."/>
            <person name="Nakagawa S."/>
            <person name="Senoh A."/>
            <person name="Mizoguchi H."/>
            <person name="Goto Y."/>
            <person name="Shimizu F."/>
            <person name="Wakebe H."/>
            <person name="Hishigaki H."/>
            <person name="Watanabe T."/>
            <person name="Sugiyama A."/>
            <person name="Takemoto M."/>
            <person name="Kawakami B."/>
            <person name="Yamazaki M."/>
            <person name="Watanabe K."/>
            <person name="Kumagai A."/>
            <person name="Itakura S."/>
            <person name="Fukuzumi Y."/>
            <person name="Fujimori Y."/>
            <person name="Komiyama M."/>
            <person name="Tashiro H."/>
            <person name="Tanigami A."/>
            <person name="Fujiwara T."/>
            <person name="Ono T."/>
            <person name="Yamada K."/>
            <person name="Fujii Y."/>
            <person name="Ozaki K."/>
            <person name="Hirao M."/>
            <person name="Ohmori Y."/>
            <person name="Kawabata A."/>
            <person name="Hikiji T."/>
            <person name="Kobatake N."/>
            <person name="Inagaki H."/>
            <person name="Ikema Y."/>
            <person name="Okamoto S."/>
            <person name="Okitani R."/>
            <person name="Kawakami T."/>
            <person name="Noguchi S."/>
            <person name="Itoh T."/>
            <person name="Shigeta K."/>
            <person name="Senba T."/>
            <person name="Matsumura K."/>
            <person name="Nakajima Y."/>
            <person name="Mizuno T."/>
            <person name="Morinaga M."/>
            <person name="Sasaki M."/>
            <person name="Togashi T."/>
            <person name="Oyama M."/>
            <person name="Hata H."/>
            <person name="Watanabe M."/>
            <person name="Komatsu T."/>
            <person name="Mizushima-Sugano J."/>
            <person name="Satoh T."/>
            <person name="Shirai Y."/>
            <person name="Takahashi Y."/>
            <person name="Nakagawa K."/>
            <person name="Okumura K."/>
            <person name="Nagase T."/>
            <person name="Nomura N."/>
            <person name="Kikuchi H."/>
            <person name="Masuho Y."/>
            <person name="Yamashita R."/>
            <person name="Nakai K."/>
            <person name="Yada T."/>
            <person name="Nakamura Y."/>
            <person name="Ohara O."/>
            <person name="Isogai T."/>
            <person name="Sugano S."/>
        </authorList>
    </citation>
    <scope>NUCLEOTIDE SEQUENCE [LARGE SCALE MRNA]</scope>
    <source>
        <tissue>Hepatoma</tissue>
        <tissue>Teratocarcinoma</tissue>
    </source>
</reference>
<reference key="4">
    <citation type="journal article" date="2004" name="Genome Res.">
        <title>The status, quality, and expansion of the NIH full-length cDNA project: the Mammalian Gene Collection (MGC).</title>
        <authorList>
            <consortium name="The MGC Project Team"/>
        </authorList>
    </citation>
    <scope>NUCLEOTIDE SEQUENCE [LARGE SCALE MRNA]</scope>
    <source>
        <tissue>Placenta</tissue>
    </source>
</reference>
<reference key="5">
    <citation type="journal article" date="2001" name="J. Biol. Chem.">
        <title>The G(2) DNA damage checkpoint delays expression of genes encoding mitotic regulators.</title>
        <authorList>
            <person name="Crawford D.F."/>
            <person name="Piwnica-Worms H."/>
        </authorList>
    </citation>
    <scope>INDUCTION</scope>
</reference>
<reference key="6">
    <citation type="journal article" date="2008" name="J. Biol. Chem.">
        <title>G2E3 is a dual function ubiquitin ligase required for early embryonic development.</title>
        <authorList>
            <person name="Brooks W.S."/>
            <person name="Helton E.S."/>
            <person name="Banerjee S."/>
            <person name="Venable M."/>
            <person name="Johnson L."/>
            <person name="Schoeb T.R."/>
            <person name="Kesterson R.A."/>
            <person name="Crawford D.F."/>
        </authorList>
    </citation>
    <scope>FUNCTION</scope>
    <scope>DOMAIN</scope>
    <scope>MUTAGENESIS OF CYS-84; CYS-147; CYS-258; CYS-261 AND CYS-666</scope>
</reference>
<evidence type="ECO:0000255" key="1">
    <source>
        <dbReference type="PROSITE-ProRule" id="PRU00104"/>
    </source>
</evidence>
<evidence type="ECO:0000255" key="2">
    <source>
        <dbReference type="PROSITE-ProRule" id="PRU01146"/>
    </source>
</evidence>
<evidence type="ECO:0000269" key="3">
    <source>
    </source>
</evidence>
<evidence type="ECO:0000269" key="4">
    <source>
    </source>
</evidence>
<evidence type="ECO:0000269" key="5">
    <source>
    </source>
</evidence>
<evidence type="ECO:0000269" key="6">
    <source>
    </source>
</evidence>
<evidence type="ECO:0000305" key="7"/>
<protein>
    <recommendedName>
        <fullName>G2/M phase-specific E3 ubiquitin-protein ligase</fullName>
        <ecNumber>2.3.2.26</ecNumber>
    </recommendedName>
    <alternativeName>
        <fullName>G2/M phase-specific HECT-type E3 ubiquitin transferase</fullName>
    </alternativeName>
</protein>
<comment type="function">
    <text evidence="6">E3 ubiquitin-protein ligase which accepts ubiquitin from an E2 ubiquitin-conjugating enzyme in the form of a thioester and then directly transfers the ubiquitin to targeted substrates. Essential in early embryonic development to prevent apoptotic death.</text>
</comment>
<comment type="catalytic activity">
    <reaction>
        <text>S-ubiquitinyl-[E2 ubiquitin-conjugating enzyme]-L-cysteine + [acceptor protein]-L-lysine = [E2 ubiquitin-conjugating enzyme]-L-cysteine + N(6)-ubiquitinyl-[acceptor protein]-L-lysine.</text>
        <dbReference type="EC" id="2.3.2.26"/>
    </reaction>
</comment>
<comment type="pathway">
    <text>Protein modification; protein ubiquitination.</text>
</comment>
<comment type="interaction">
    <interactant intactId="EBI-751757">
        <id>Q7L622</id>
    </interactant>
    <interactant intactId="EBI-11954292">
        <id>Q86V38</id>
        <label>ATN1</label>
    </interactant>
    <organismsDiffer>false</organismsDiffer>
    <experiments>3</experiments>
</comment>
<comment type="interaction">
    <interactant intactId="EBI-751757">
        <id>Q7L622</id>
    </interactant>
    <interactant intactId="EBI-466029">
        <id>P42858</id>
        <label>HTT</label>
    </interactant>
    <organismsDiffer>false</organismsDiffer>
    <experiments>6</experiments>
</comment>
<comment type="interaction">
    <interactant intactId="EBI-751757">
        <id>Q7L622</id>
    </interactant>
    <interactant intactId="EBI-2432309">
        <id>Q92876</id>
        <label>KLK6</label>
    </interactant>
    <organismsDiffer>false</organismsDiffer>
    <experiments>3</experiments>
</comment>
<comment type="interaction">
    <interactant intactId="EBI-751757">
        <id>Q7L622</id>
    </interactant>
    <interactant intactId="EBI-475646">
        <id>P07196</id>
        <label>NEFL</label>
    </interactant>
    <organismsDiffer>false</organismsDiffer>
    <experiments>3</experiments>
</comment>
<comment type="interaction">
    <interactant intactId="EBI-751757">
        <id>Q7L622</id>
    </interactant>
    <interactant intactId="EBI-372635">
        <id>P62841</id>
        <label>RPS15</label>
    </interactant>
    <organismsDiffer>false</organismsDiffer>
    <experiments>3</experiments>
</comment>
<comment type="interaction">
    <interactant intactId="EBI-751757">
        <id>Q7L622</id>
    </interactant>
    <interactant intactId="EBI-351113">
        <id>Q69YQ0</id>
        <label>SPECC1L</label>
    </interactant>
    <organismsDiffer>false</organismsDiffer>
    <experiments>2</experiments>
</comment>
<comment type="interaction">
    <interactant intactId="EBI-751757">
        <id>Q7L622</id>
    </interactant>
    <interactant intactId="EBI-5235340">
        <id>Q7Z699</id>
        <label>SPRED1</label>
    </interactant>
    <organismsDiffer>false</organismsDiffer>
    <experiments>3</experiments>
</comment>
<comment type="interaction">
    <interactant intactId="EBI-751757">
        <id>Q7L622</id>
    </interactant>
    <interactant intactId="EBI-720609">
        <id>O76024</id>
        <label>WFS1</label>
    </interactant>
    <organismsDiffer>false</organismsDiffer>
    <experiments>3</experiments>
</comment>
<comment type="subcellular location">
    <subcellularLocation>
        <location evidence="5">Nucleus</location>
        <location evidence="5">Nucleolus</location>
    </subcellularLocation>
    <subcellularLocation>
        <location evidence="5">Cytoplasm</location>
    </subcellularLocation>
    <text evidence="5">Shuttles between the nucleus and the cytoplasm. In the nucleus, delocalizes from the nucleolus to the nucleoplasm in response to DNA damage.</text>
</comment>
<comment type="tissue specificity">
    <text evidence="3">Predominantly expressed in brain, liver, kidney, testes and ovary.</text>
</comment>
<comment type="induction">
    <text evidence="4">Up-regulated approximately 4-fold in G2 when compared to S phase. Down-regulated approximately 3-fold by gamma-irradiation.</text>
</comment>
<comment type="domain">
    <text evidence="6">Ubiquitin ligase activity is mediated by two distinct domains, PHD-type zinc fingers 2 and 3. The use of these distinct domains may allow ubiquitination of different targets by each domain. The HECT domain is catalytically inactive and does not contribute to this activity.</text>
</comment>
<comment type="sequence caution" evidence="7">
    <conflict type="erroneous initiation">
        <sequence resource="EMBL-CDS" id="BAA92571"/>
    </conflict>
</comment>
<comment type="sequence caution" evidence="7">
    <conflict type="erroneous initiation">
        <sequence resource="EMBL-CDS" id="BAB14280"/>
    </conflict>
</comment>
<organism>
    <name type="scientific">Homo sapiens</name>
    <name type="common">Human</name>
    <dbReference type="NCBI Taxonomy" id="9606"/>
    <lineage>
        <taxon>Eukaryota</taxon>
        <taxon>Metazoa</taxon>
        <taxon>Chordata</taxon>
        <taxon>Craniata</taxon>
        <taxon>Vertebrata</taxon>
        <taxon>Euteleostomi</taxon>
        <taxon>Mammalia</taxon>
        <taxon>Eutheria</taxon>
        <taxon>Euarchontoglires</taxon>
        <taxon>Primates</taxon>
        <taxon>Haplorrhini</taxon>
        <taxon>Catarrhini</taxon>
        <taxon>Hominidae</taxon>
        <taxon>Homo</taxon>
    </lineage>
</organism>
<proteinExistence type="evidence at protein level"/>
<keyword id="KW-0053">Apoptosis</keyword>
<keyword id="KW-0963">Cytoplasm</keyword>
<keyword id="KW-0217">Developmental protein</keyword>
<keyword id="KW-0479">Metal-binding</keyword>
<keyword id="KW-0539">Nucleus</keyword>
<keyword id="KW-1267">Proteomics identification</keyword>
<keyword id="KW-1185">Reference proteome</keyword>
<keyword id="KW-0677">Repeat</keyword>
<keyword id="KW-0808">Transferase</keyword>
<keyword id="KW-0833">Ubl conjugation pathway</keyword>
<keyword id="KW-0862">Zinc</keyword>
<keyword id="KW-0863">Zinc-finger</keyword>
<sequence length="706" mass="80504">MNESKPGDSQNLACVFCRKHDDCPNKYGEKKTKEKWNLTVHYYCLLMSSGIWQRGKEEEGVYGFLIEDIRKEVNRASKLKCCVCKKNGASIGCVAPRCKRSYHFPCGLQRECIFQFTGNFASFCWDHRPVQIITSNNYRESLPCTICLEFIEPIPSYNILRSPCCKNAWFHRDCLQVQAINAGVFFFRCTICNNSDIFQKEMLRMGIHIPEKDASWELEENAYQELLQHYERCDVRRCRCKEGRDYNAPDSKWEIKRCQCCGSSGTHLACSSLRSWEQNWECLECRGIIYNSGEFQKAKKHVLPNSNNVGITDCLLEESSPKLPRQSPGSQSKDLLRQGSKFRRNVSTLLIELGFQIKKKTKRLYINKANIWNSALDAFRNRNFNPSYAIEVAYVIENDNFGSEHPGSKQEFLSLLMQHLENSSLFEGSLSKNLSLNSQALKENLYYEAGKMLAISLVHGGPSPGFFSKTLFNCLVYGPENTQPILDDVSDFDVAQIIIRINTATTVADLKSIINECYNYLELIGCLRLITTLSDKYMLVKDILGYHVIQRVHTPFESFKQGLKTLGVLEKIQAYPEAFCSILCHKPESLSAKILSELFTVHTLPDVKALGFWNSYLQAVEDGKSTTTMEDILIFATGCSSIPPAGFKPTPSIECLHVDFPVGNKCNNCLAIPITNTYKEFQENMDFTIRNTLRLEKEESSHYIGH</sequence>
<feature type="chain" id="PRO_0000248343" description="G2/M phase-specific E3 ubiquitin-protein ligase">
    <location>
        <begin position="1"/>
        <end position="706"/>
    </location>
</feature>
<feature type="domain" description="HECT" evidence="1">
    <location>
        <begin position="371"/>
        <end position="698"/>
    </location>
</feature>
<feature type="zinc finger region" description="C2HC pre-PHD-type" evidence="2">
    <location>
        <begin position="11"/>
        <end position="51"/>
    </location>
</feature>
<feature type="zinc finger region" description="PHD-type 1" evidence="2">
    <location>
        <begin position="79"/>
        <end position="128"/>
    </location>
</feature>
<feature type="zinc finger region" description="PHD-type 2; degenerate">
    <location>
        <begin position="143"/>
        <end position="193"/>
    </location>
</feature>
<feature type="zinc finger region" description="PHD-type 3">
    <location>
        <begin position="237"/>
        <end position="286"/>
    </location>
</feature>
<feature type="sequence variant" id="VAR_027273" description="In dbSNP:rs17096934.">
    <original>R</original>
    <variation>H</variation>
    <location>
        <position position="232"/>
    </location>
</feature>
<feature type="mutagenesis site" description="Loss of nucleolar localization. No effect on nuclear localization." evidence="5">
    <original>KK</original>
    <variation>AA</variation>
    <location>
        <begin position="30"/>
        <end position="31"/>
    </location>
</feature>
<feature type="mutagenesis site" description="Strong activity; when associated with A-258; A-261 and A-666. Strong activity; when associated with A-147 and A-666. No activity; when associated with A-147; A-258 and A-261." evidence="6">
    <original>C</original>
    <variation>A</variation>
    <location>
        <position position="84"/>
    </location>
</feature>
<feature type="mutagenesis site" description="Strong activity; when associated with A-84 and A-666. No activity; when associated with A-258; A-261 and A-666. No activity; when associated with A-84; A-258 and A-261." evidence="6">
    <original>C</original>
    <variation>A</variation>
    <location>
        <position position="147"/>
    </location>
</feature>
<feature type="mutagenesis site" description="Strong activity; when associated with A-84; A-261 and A-666. No activity; when associated with A-147; A-261 and A-666. No activity; when associated with A-84; A-147 and A-261." evidence="6">
    <original>C</original>
    <variation>A</variation>
    <location>
        <position position="258"/>
    </location>
</feature>
<feature type="mutagenesis site" description="Strong activity; when associated with A-84; A-258 and A-666. No activity; when associated with A-84; A-147 and A-258. No activity; when associated with A-147; A-258 and A-666." evidence="6">
    <original>C</original>
    <variation>A</variation>
    <location>
        <position position="261"/>
    </location>
</feature>
<feature type="mutagenesis site" description="No effect on subcellular location. Strong activity; when associated with A-84; A-258 and A261. Strong activity; when associated with A-84 and A-147. No activity; when associated with A-147; A-258 and A-261." evidence="5 6">
    <original>C</original>
    <variation>A</variation>
    <location>
        <position position="666"/>
    </location>
</feature>
<feature type="sequence conflict" description="In Ref. 3; BAA91095." evidence="7" ref="3">
    <original>V</original>
    <variation>A</variation>
    <location>
        <position position="184"/>
    </location>
</feature>
<feature type="sequence conflict" description="In Ref. 3; BAB14280." evidence="7" ref="3">
    <original>T</original>
    <variation>A</variation>
    <location>
        <position position="627"/>
    </location>
</feature>
<feature type="sequence conflict" description="In Ref. 3; BAA91095." evidence="7" ref="3">
    <original>K</original>
    <variation>E</variation>
    <location>
        <position position="665"/>
    </location>
</feature>
<dbReference type="EC" id="2.3.2.26"/>
<dbReference type="EMBL" id="AB037754">
    <property type="protein sequence ID" value="BAA92571.1"/>
    <property type="status" value="ALT_INIT"/>
    <property type="molecule type" value="mRNA"/>
</dbReference>
<dbReference type="EMBL" id="AK000340">
    <property type="protein sequence ID" value="BAA91095.1"/>
    <property type="molecule type" value="mRNA"/>
</dbReference>
<dbReference type="EMBL" id="AK022867">
    <property type="protein sequence ID" value="BAB14280.1"/>
    <property type="status" value="ALT_INIT"/>
    <property type="molecule type" value="mRNA"/>
</dbReference>
<dbReference type="EMBL" id="BC000973">
    <property type="protein sequence ID" value="AAH00973.2"/>
    <property type="molecule type" value="mRNA"/>
</dbReference>
<dbReference type="CCDS" id="CCDS9638.1"/>
<dbReference type="RefSeq" id="NP_001295026.1">
    <property type="nucleotide sequence ID" value="NM_001308097.1"/>
</dbReference>
<dbReference type="RefSeq" id="NP_060239.2">
    <property type="nucleotide sequence ID" value="NM_017769.4"/>
</dbReference>
<dbReference type="RefSeq" id="XP_011535227.1">
    <property type="nucleotide sequence ID" value="XM_011536925.3"/>
</dbReference>
<dbReference type="RefSeq" id="XP_054232304.1">
    <property type="nucleotide sequence ID" value="XM_054376329.1"/>
</dbReference>
<dbReference type="SMR" id="Q7L622"/>
<dbReference type="BioGRID" id="120771">
    <property type="interactions" value="24"/>
</dbReference>
<dbReference type="FunCoup" id="Q7L622">
    <property type="interactions" value="4357"/>
</dbReference>
<dbReference type="IntAct" id="Q7L622">
    <property type="interactions" value="17"/>
</dbReference>
<dbReference type="MINT" id="Q7L622"/>
<dbReference type="STRING" id="9606.ENSP00000206595"/>
<dbReference type="GlyGen" id="Q7L622">
    <property type="glycosylation" value="2 sites, 1 N-linked glycan (1 site)"/>
</dbReference>
<dbReference type="iPTMnet" id="Q7L622"/>
<dbReference type="PhosphoSitePlus" id="Q7L622"/>
<dbReference type="BioMuta" id="G2E3"/>
<dbReference type="DMDM" id="74738611"/>
<dbReference type="jPOST" id="Q7L622"/>
<dbReference type="MassIVE" id="Q7L622"/>
<dbReference type="PaxDb" id="9606-ENSP00000206595"/>
<dbReference type="PeptideAtlas" id="Q7L622"/>
<dbReference type="ProteomicsDB" id="68824"/>
<dbReference type="Pumba" id="Q7L622"/>
<dbReference type="Antibodypedia" id="11">
    <property type="antibodies" value="115 antibodies from 19 providers"/>
</dbReference>
<dbReference type="DNASU" id="55632"/>
<dbReference type="Ensembl" id="ENST00000206595.11">
    <property type="protein sequence ID" value="ENSP00000206595.6"/>
    <property type="gene ID" value="ENSG00000092140.16"/>
</dbReference>
<dbReference type="GeneID" id="55632"/>
<dbReference type="KEGG" id="hsa:55632"/>
<dbReference type="MANE-Select" id="ENST00000206595.11">
    <property type="protein sequence ID" value="ENSP00000206595.6"/>
    <property type="RefSeq nucleotide sequence ID" value="NM_017769.5"/>
    <property type="RefSeq protein sequence ID" value="NP_060239.2"/>
</dbReference>
<dbReference type="UCSC" id="uc001wqk.3">
    <property type="organism name" value="human"/>
</dbReference>
<dbReference type="AGR" id="HGNC:20338"/>
<dbReference type="CTD" id="55632"/>
<dbReference type="DisGeNET" id="55632"/>
<dbReference type="GeneCards" id="G2E3"/>
<dbReference type="HGNC" id="HGNC:20338">
    <property type="gene designation" value="G2E3"/>
</dbReference>
<dbReference type="HPA" id="ENSG00000092140">
    <property type="expression patterns" value="Tissue enhanced (testis)"/>
</dbReference>
<dbReference type="MIM" id="611299">
    <property type="type" value="gene"/>
</dbReference>
<dbReference type="neXtProt" id="NX_Q7L622"/>
<dbReference type="OpenTargets" id="ENSG00000092140"/>
<dbReference type="PharmGKB" id="PA164720127"/>
<dbReference type="VEuPathDB" id="HostDB:ENSG00000092140"/>
<dbReference type="eggNOG" id="KOG1084">
    <property type="taxonomic scope" value="Eukaryota"/>
</dbReference>
<dbReference type="GeneTree" id="ENSGT00950000182865"/>
<dbReference type="InParanoid" id="Q7L622"/>
<dbReference type="OrthoDB" id="2384350at2759"/>
<dbReference type="PAN-GO" id="Q7L622">
    <property type="GO annotations" value="1 GO annotation based on evolutionary models"/>
</dbReference>
<dbReference type="PhylomeDB" id="Q7L622"/>
<dbReference type="TreeFam" id="TF325426"/>
<dbReference type="PathwayCommons" id="Q7L622"/>
<dbReference type="SignaLink" id="Q7L622"/>
<dbReference type="SIGNOR" id="Q7L622"/>
<dbReference type="UniPathway" id="UPA00143"/>
<dbReference type="BioGRID-ORCS" id="55632">
    <property type="hits" value="15 hits in 1191 CRISPR screens"/>
</dbReference>
<dbReference type="CD-CODE" id="91857CE7">
    <property type="entry name" value="Nucleolus"/>
</dbReference>
<dbReference type="ChiTaRS" id="G2E3">
    <property type="organism name" value="human"/>
</dbReference>
<dbReference type="GeneWiki" id="KIAA1333"/>
<dbReference type="GenomeRNAi" id="55632"/>
<dbReference type="Pharos" id="Q7L622">
    <property type="development level" value="Tbio"/>
</dbReference>
<dbReference type="PRO" id="PR:Q7L622"/>
<dbReference type="Proteomes" id="UP000005640">
    <property type="component" value="Chromosome 14"/>
</dbReference>
<dbReference type="RNAct" id="Q7L622">
    <property type="molecule type" value="protein"/>
</dbReference>
<dbReference type="Bgee" id="ENSG00000092140">
    <property type="expression patterns" value="Expressed in sperm and 181 other cell types or tissues"/>
</dbReference>
<dbReference type="ExpressionAtlas" id="Q7L622">
    <property type="expression patterns" value="baseline and differential"/>
</dbReference>
<dbReference type="GO" id="GO:0005829">
    <property type="term" value="C:cytosol"/>
    <property type="evidence" value="ECO:0000314"/>
    <property type="project" value="HPA"/>
</dbReference>
<dbReference type="GO" id="GO:0005794">
    <property type="term" value="C:Golgi apparatus"/>
    <property type="evidence" value="ECO:0000314"/>
    <property type="project" value="HPA"/>
</dbReference>
<dbReference type="GO" id="GO:0043231">
    <property type="term" value="C:intracellular membrane-bounded organelle"/>
    <property type="evidence" value="ECO:0000314"/>
    <property type="project" value="HPA"/>
</dbReference>
<dbReference type="GO" id="GO:0005730">
    <property type="term" value="C:nucleolus"/>
    <property type="evidence" value="ECO:0007669"/>
    <property type="project" value="UniProtKB-SubCell"/>
</dbReference>
<dbReference type="GO" id="GO:0005634">
    <property type="term" value="C:nucleus"/>
    <property type="evidence" value="ECO:0000318"/>
    <property type="project" value="GO_Central"/>
</dbReference>
<dbReference type="GO" id="GO:0004842">
    <property type="term" value="F:ubiquitin-protein transferase activity"/>
    <property type="evidence" value="ECO:0007669"/>
    <property type="project" value="InterPro"/>
</dbReference>
<dbReference type="GO" id="GO:0008270">
    <property type="term" value="F:zinc ion binding"/>
    <property type="evidence" value="ECO:0007669"/>
    <property type="project" value="UniProtKB-KW"/>
</dbReference>
<dbReference type="GO" id="GO:0006915">
    <property type="term" value="P:apoptotic process"/>
    <property type="evidence" value="ECO:0007669"/>
    <property type="project" value="UniProtKB-KW"/>
</dbReference>
<dbReference type="GO" id="GO:0016567">
    <property type="term" value="P:protein ubiquitination"/>
    <property type="evidence" value="ECO:0007669"/>
    <property type="project" value="UniProtKB-UniPathway"/>
</dbReference>
<dbReference type="CDD" id="cd15669">
    <property type="entry name" value="ePHD_PHF7_G2E3_like"/>
    <property type="match status" value="1"/>
</dbReference>
<dbReference type="CDD" id="cd15496">
    <property type="entry name" value="PHD_PHF7_G2E3_like"/>
    <property type="match status" value="1"/>
</dbReference>
<dbReference type="FunFam" id="3.30.40.10:FF:000132">
    <property type="entry name" value="G2/M phase-specific E3 ubiquitin-protein ligase"/>
    <property type="match status" value="1"/>
</dbReference>
<dbReference type="FunFam" id="3.90.1750.10:FF:000049">
    <property type="entry name" value="G2/M phase-specific E3 ubiquitin-protein ligase"/>
    <property type="match status" value="1"/>
</dbReference>
<dbReference type="FunFam" id="3.30.40.10:FF:000192">
    <property type="entry name" value="G2/M phase-specific E3 ubiquitin-protein ligase isoform X1"/>
    <property type="match status" value="1"/>
</dbReference>
<dbReference type="FunFam" id="3.30.2410.10:FF:000019">
    <property type="entry name" value="G2/M-phase specific E3 ubiquitin protein ligase"/>
    <property type="match status" value="1"/>
</dbReference>
<dbReference type="Gene3D" id="3.30.2410.10">
    <property type="entry name" value="Hect, E3 ligase catalytic domain"/>
    <property type="match status" value="1"/>
</dbReference>
<dbReference type="Gene3D" id="3.90.1750.10">
    <property type="entry name" value="Hect, E3 ligase catalytic domains"/>
    <property type="match status" value="1"/>
</dbReference>
<dbReference type="Gene3D" id="3.30.40.10">
    <property type="entry name" value="Zinc/RING finger domain, C3HC4 (zinc finger)"/>
    <property type="match status" value="2"/>
</dbReference>
<dbReference type="InterPro" id="IPR034732">
    <property type="entry name" value="EPHD"/>
</dbReference>
<dbReference type="InterPro" id="IPR000569">
    <property type="entry name" value="HECT_dom"/>
</dbReference>
<dbReference type="InterPro" id="IPR035983">
    <property type="entry name" value="Hect_E3_ubiquitin_ligase"/>
</dbReference>
<dbReference type="InterPro" id="IPR051188">
    <property type="entry name" value="PHD-type_Zinc_Finger"/>
</dbReference>
<dbReference type="InterPro" id="IPR042013">
    <property type="entry name" value="PHF7/G2E3_ePHD"/>
</dbReference>
<dbReference type="InterPro" id="IPR042012">
    <property type="entry name" value="PHF7/G2E3_PHD"/>
</dbReference>
<dbReference type="InterPro" id="IPR019786">
    <property type="entry name" value="Zinc_finger_PHD-type_CS"/>
</dbReference>
<dbReference type="InterPro" id="IPR011011">
    <property type="entry name" value="Znf_FYVE_PHD"/>
</dbReference>
<dbReference type="InterPro" id="IPR001965">
    <property type="entry name" value="Znf_PHD"/>
</dbReference>
<dbReference type="InterPro" id="IPR013083">
    <property type="entry name" value="Znf_RING/FYVE/PHD"/>
</dbReference>
<dbReference type="PANTHER" id="PTHR12420:SF37">
    <property type="entry name" value="G2_M PHASE-SPECIFIC E3 UBIQUITIN-PROTEIN LIGASE"/>
    <property type="match status" value="1"/>
</dbReference>
<dbReference type="PANTHER" id="PTHR12420">
    <property type="entry name" value="PHD FINGER PROTEIN"/>
    <property type="match status" value="1"/>
</dbReference>
<dbReference type="Pfam" id="PF00632">
    <property type="entry name" value="HECT"/>
    <property type="match status" value="1"/>
</dbReference>
<dbReference type="Pfam" id="PF13771">
    <property type="entry name" value="zf-HC5HC2H"/>
    <property type="match status" value="1"/>
</dbReference>
<dbReference type="SMART" id="SM00119">
    <property type="entry name" value="HECTc"/>
    <property type="match status" value="1"/>
</dbReference>
<dbReference type="SMART" id="SM00249">
    <property type="entry name" value="PHD"/>
    <property type="match status" value="2"/>
</dbReference>
<dbReference type="SUPFAM" id="SSF57903">
    <property type="entry name" value="FYVE/PHD zinc finger"/>
    <property type="match status" value="1"/>
</dbReference>
<dbReference type="SUPFAM" id="SSF56204">
    <property type="entry name" value="Hect, E3 ligase catalytic domain"/>
    <property type="match status" value="1"/>
</dbReference>
<dbReference type="PROSITE" id="PS51805">
    <property type="entry name" value="EPHD"/>
    <property type="match status" value="1"/>
</dbReference>
<dbReference type="PROSITE" id="PS50237">
    <property type="entry name" value="HECT"/>
    <property type="match status" value="1"/>
</dbReference>
<dbReference type="PROSITE" id="PS01359">
    <property type="entry name" value="ZF_PHD_1"/>
    <property type="match status" value="1"/>
</dbReference>
<name>G2E3_HUMAN</name>
<gene>
    <name type="primary">G2E3</name>
    <name type="synonym">KIAA1333</name>
</gene>